<feature type="chain" id="PRO_1000088231" description="Segregation and condensation protein B">
    <location>
        <begin position="1"/>
        <end position="180"/>
    </location>
</feature>
<protein>
    <recommendedName>
        <fullName evidence="1">Segregation and condensation protein B</fullName>
    </recommendedName>
</protein>
<dbReference type="EMBL" id="CP000703">
    <property type="protein sequence ID" value="ABQ49345.1"/>
    <property type="molecule type" value="Genomic_DNA"/>
</dbReference>
<dbReference type="RefSeq" id="WP_000368656.1">
    <property type="nucleotide sequence ID" value="NC_009487.1"/>
</dbReference>
<dbReference type="SMR" id="A5IT22"/>
<dbReference type="KEGG" id="saj:SaurJH9_1551"/>
<dbReference type="HOGENOM" id="CLU_045647_5_3_9"/>
<dbReference type="GO" id="GO:0005737">
    <property type="term" value="C:cytoplasm"/>
    <property type="evidence" value="ECO:0007669"/>
    <property type="project" value="UniProtKB-SubCell"/>
</dbReference>
<dbReference type="GO" id="GO:0051301">
    <property type="term" value="P:cell division"/>
    <property type="evidence" value="ECO:0007669"/>
    <property type="project" value="UniProtKB-KW"/>
</dbReference>
<dbReference type="GO" id="GO:0051304">
    <property type="term" value="P:chromosome separation"/>
    <property type="evidence" value="ECO:0007669"/>
    <property type="project" value="InterPro"/>
</dbReference>
<dbReference type="GO" id="GO:0006260">
    <property type="term" value="P:DNA replication"/>
    <property type="evidence" value="ECO:0007669"/>
    <property type="project" value="UniProtKB-UniRule"/>
</dbReference>
<dbReference type="Gene3D" id="1.10.10.10">
    <property type="entry name" value="Winged helix-like DNA-binding domain superfamily/Winged helix DNA-binding domain"/>
    <property type="match status" value="2"/>
</dbReference>
<dbReference type="HAMAP" id="MF_01804">
    <property type="entry name" value="ScpB"/>
    <property type="match status" value="1"/>
</dbReference>
<dbReference type="InterPro" id="IPR005234">
    <property type="entry name" value="ScpB_csome_segregation"/>
</dbReference>
<dbReference type="InterPro" id="IPR036388">
    <property type="entry name" value="WH-like_DNA-bd_sf"/>
</dbReference>
<dbReference type="InterPro" id="IPR036390">
    <property type="entry name" value="WH_DNA-bd_sf"/>
</dbReference>
<dbReference type="NCBIfam" id="TIGR00281">
    <property type="entry name" value="SMC-Scp complex subunit ScpB"/>
    <property type="match status" value="1"/>
</dbReference>
<dbReference type="PANTHER" id="PTHR34298">
    <property type="entry name" value="SEGREGATION AND CONDENSATION PROTEIN B"/>
    <property type="match status" value="1"/>
</dbReference>
<dbReference type="PANTHER" id="PTHR34298:SF2">
    <property type="entry name" value="SEGREGATION AND CONDENSATION PROTEIN B"/>
    <property type="match status" value="1"/>
</dbReference>
<dbReference type="Pfam" id="PF04079">
    <property type="entry name" value="SMC_ScpB"/>
    <property type="match status" value="1"/>
</dbReference>
<dbReference type="PIRSF" id="PIRSF019345">
    <property type="entry name" value="ScpB"/>
    <property type="match status" value="1"/>
</dbReference>
<dbReference type="SUPFAM" id="SSF46785">
    <property type="entry name" value="Winged helix' DNA-binding domain"/>
    <property type="match status" value="2"/>
</dbReference>
<evidence type="ECO:0000255" key="1">
    <source>
        <dbReference type="HAMAP-Rule" id="MF_01804"/>
    </source>
</evidence>
<accession>A5IT22</accession>
<sequence length="180" mass="20206">MDNHGILESLLFTAGDEGLDEKQLLEILDMSKDQLVELIENYSSHGLMIQRFGTTYVLTTKKEAATYIEQLIEQKSQMKLSQAAMEVLSIIAYNQPLSRSDIELIRSINSDGAVKTLIAKGLVEAKVVNEQRSQQLITTDLFLNVFGISNIEDLPTTEEDDEEMDAFFSNLVNQKGENND</sequence>
<proteinExistence type="inferred from homology"/>
<keyword id="KW-0131">Cell cycle</keyword>
<keyword id="KW-0132">Cell division</keyword>
<keyword id="KW-0159">Chromosome partition</keyword>
<keyword id="KW-0963">Cytoplasm</keyword>
<gene>
    <name evidence="1" type="primary">scpB</name>
    <name type="ordered locus">SaurJH9_1551</name>
</gene>
<reference key="1">
    <citation type="submission" date="2007-05" db="EMBL/GenBank/DDBJ databases">
        <title>Complete sequence of chromosome of Staphylococcus aureus subsp. aureus JH9.</title>
        <authorList>
            <consortium name="US DOE Joint Genome Institute"/>
            <person name="Copeland A."/>
            <person name="Lucas S."/>
            <person name="Lapidus A."/>
            <person name="Barry K."/>
            <person name="Detter J.C."/>
            <person name="Glavina del Rio T."/>
            <person name="Hammon N."/>
            <person name="Israni S."/>
            <person name="Pitluck S."/>
            <person name="Chain P."/>
            <person name="Malfatti S."/>
            <person name="Shin M."/>
            <person name="Vergez L."/>
            <person name="Schmutz J."/>
            <person name="Larimer F."/>
            <person name="Land M."/>
            <person name="Hauser L."/>
            <person name="Kyrpides N."/>
            <person name="Kim E."/>
            <person name="Tomasz A."/>
            <person name="Richardson P."/>
        </authorList>
    </citation>
    <scope>NUCLEOTIDE SEQUENCE [LARGE SCALE GENOMIC DNA]</scope>
    <source>
        <strain>JH9</strain>
    </source>
</reference>
<organism>
    <name type="scientific">Staphylococcus aureus (strain JH9)</name>
    <dbReference type="NCBI Taxonomy" id="359786"/>
    <lineage>
        <taxon>Bacteria</taxon>
        <taxon>Bacillati</taxon>
        <taxon>Bacillota</taxon>
        <taxon>Bacilli</taxon>
        <taxon>Bacillales</taxon>
        <taxon>Staphylococcaceae</taxon>
        <taxon>Staphylococcus</taxon>
    </lineage>
</organism>
<comment type="function">
    <text evidence="1">Participates in chromosomal partition during cell division. May act via the formation of a condensin-like complex containing Smc and ScpA that pull DNA away from mid-cell into both cell halves.</text>
</comment>
<comment type="subunit">
    <text evidence="1">Homodimer. Homodimerization may be required to stabilize the binding of ScpA to the Smc head domains. Component of a cohesin-like complex composed of ScpA, ScpB and the Smc homodimer, in which ScpA and ScpB bind to the head domain of Smc. The presence of the three proteins is required for the association of the complex with DNA.</text>
</comment>
<comment type="subcellular location">
    <subcellularLocation>
        <location evidence="1">Cytoplasm</location>
    </subcellularLocation>
    <text evidence="1">Associated with two foci at the outer edges of the nucleoid region in young cells, and at four foci within both cell halves in older cells.</text>
</comment>
<comment type="similarity">
    <text evidence="1">Belongs to the ScpB family.</text>
</comment>
<name>SCPB_STAA9</name>